<proteinExistence type="inferred from homology"/>
<sequence>MSSVMETPHAGKLKKYEFTPIGYAEEKRKEGIDLLKENGLKRSLESGSDLPAERKRVRNPSVVDETFSSTRLFNDTSFDETVPEGIIQERRPNSRKNLVDDLLIKDQETTENLTSNPLKETESSLKKLQMENYNLRIKCTSLLKFLNNISDDGEIVKNLEILDELDDLKVRYRQLNLDYTALQKQCDRIEDQNDEHEDIAKLKESNDKLKEELRSTKENLIDTDAQLQQLKDTIKSLENKIFNMRTEQTEKECQHGMQVDLLQSKINETSTSLTSKERECSDLKEKIKWLTSQLQEFDHQSGSLLDLQSTLDSKNEAIRNLEAQLQRNEHQRQSLEREVSLLQEELSSIRETHQKIITHKDQQIKQLTENLSSSDSEAVKRLNELSSERLRLLETNKSLKFSEKDLKQTVKSLEDQLNSCQEELHASQDKHKEKVSELLRKQLPYTSSEVEAMRQELLEMRKSNDILKTENNSLSRRLDNLIRQSPSKKSVEVDIQRKNNEIRALRSTVKDLEHELQDVTSNVSKLKENHKEEIQKLRKQVNPDLPTDVLEEKSKLQNRISLLQMELNSIKDTKEKELAMWRRKYETIRRSNEELLQEGKDQSGQLSNILNEKDKEILQLQSRFNSLLTEKNSLLNELSKVRSHKDDYKEELKKNQSRLEFITKEFVKLKDASKQAENSEDAKDILNNKWYSKYQSMKDKFLGELKSLQDENLELQKSLLKQKANPNSTAEVFSKTTEKGTLKDEIDYYRLKYANEVKQNNDLKTMNQYLNRVLRASSQHVKLDILKLQNEVPVYNPYADIPFHNMRFSHQKIKFKTVALLVLSCIRMKTTIEARRWDRQRLDYLKRKIVLNQDNISW</sequence>
<protein>
    <recommendedName>
        <fullName>Spindle pole body component 110</fullName>
    </recommendedName>
    <alternativeName>
        <fullName>Spindle pole body spacer protein SPC110</fullName>
    </alternativeName>
</protein>
<comment type="function">
    <text evidence="1">Component of the spindle pole body (SPB) required for the proper execution of spindle pole body (SPB) duplication. Potential role in cross-linking filaments or anchoring other molecules. It is essential for growth (By similarity).</text>
</comment>
<comment type="subunit">
    <text evidence="1">Homodimer.</text>
</comment>
<comment type="subcellular location">
    <subcellularLocation>
        <location evidence="1">Nucleus</location>
    </subcellularLocation>
    <subcellularLocation>
        <location evidence="1">Cytoplasm</location>
        <location evidence="1">Cytoskeleton</location>
        <location evidence="1">Microtubule organizing center</location>
        <location evidence="1">Spindle pole body</location>
    </subcellularLocation>
    <text evidence="1">Tightly associated with the nucleus. It is present in a granular pattern that excludes the nucleolus.</text>
</comment>
<comment type="similarity">
    <text evidence="3">Belongs to the SPC110 family.</text>
</comment>
<dbReference type="EMBL" id="CR382125">
    <property type="protein sequence ID" value="CAH00011.1"/>
    <property type="molecule type" value="Genomic_DNA"/>
</dbReference>
<dbReference type="RefSeq" id="XP_454924.1">
    <property type="nucleotide sequence ID" value="XM_454924.1"/>
</dbReference>
<dbReference type="SMR" id="Q6CMB5"/>
<dbReference type="FunCoup" id="Q6CMB5">
    <property type="interactions" value="336"/>
</dbReference>
<dbReference type="PaxDb" id="284590-Q6CMB5"/>
<dbReference type="KEGG" id="kla:KLLA0_E21517g"/>
<dbReference type="eggNOG" id="ENOG502QUTQ">
    <property type="taxonomic scope" value="Eukaryota"/>
</dbReference>
<dbReference type="HOGENOM" id="CLU_329279_0_0_1"/>
<dbReference type="InParanoid" id="Q6CMB5"/>
<dbReference type="OMA" id="EKCALEX"/>
<dbReference type="Proteomes" id="UP000000598">
    <property type="component" value="Chromosome E"/>
</dbReference>
<dbReference type="GO" id="GO:0005737">
    <property type="term" value="C:cytoplasm"/>
    <property type="evidence" value="ECO:0007669"/>
    <property type="project" value="UniProtKB-KW"/>
</dbReference>
<dbReference type="GO" id="GO:0005634">
    <property type="term" value="C:nucleus"/>
    <property type="evidence" value="ECO:0007669"/>
    <property type="project" value="UniProtKB-SubCell"/>
</dbReference>
<dbReference type="GO" id="GO:0005816">
    <property type="term" value="C:spindle pole body"/>
    <property type="evidence" value="ECO:0007669"/>
    <property type="project" value="UniProtKB-SubCell"/>
</dbReference>
<dbReference type="Gene3D" id="1.10.287.1490">
    <property type="match status" value="2"/>
</dbReference>
<dbReference type="Gene3D" id="6.10.310.10">
    <property type="match status" value="1"/>
</dbReference>
<dbReference type="InterPro" id="IPR040593">
    <property type="entry name" value="Spc110_C"/>
</dbReference>
<dbReference type="PANTHER" id="PTHR19327">
    <property type="entry name" value="GOLGIN"/>
    <property type="match status" value="1"/>
</dbReference>
<dbReference type="PANTHER" id="PTHR19327:SF0">
    <property type="entry name" value="GOLGIN SUBFAMILY A MEMBER 4"/>
    <property type="match status" value="1"/>
</dbReference>
<dbReference type="Pfam" id="PF18520">
    <property type="entry name" value="Spc110_C"/>
    <property type="match status" value="1"/>
</dbReference>
<reference key="1">
    <citation type="journal article" date="2004" name="Nature">
        <title>Genome evolution in yeasts.</title>
        <authorList>
            <person name="Dujon B."/>
            <person name="Sherman D."/>
            <person name="Fischer G."/>
            <person name="Durrens P."/>
            <person name="Casaregola S."/>
            <person name="Lafontaine I."/>
            <person name="de Montigny J."/>
            <person name="Marck C."/>
            <person name="Neuveglise C."/>
            <person name="Talla E."/>
            <person name="Goffard N."/>
            <person name="Frangeul L."/>
            <person name="Aigle M."/>
            <person name="Anthouard V."/>
            <person name="Babour A."/>
            <person name="Barbe V."/>
            <person name="Barnay S."/>
            <person name="Blanchin S."/>
            <person name="Beckerich J.-M."/>
            <person name="Beyne E."/>
            <person name="Bleykasten C."/>
            <person name="Boisrame A."/>
            <person name="Boyer J."/>
            <person name="Cattolico L."/>
            <person name="Confanioleri F."/>
            <person name="de Daruvar A."/>
            <person name="Despons L."/>
            <person name="Fabre E."/>
            <person name="Fairhead C."/>
            <person name="Ferry-Dumazet H."/>
            <person name="Groppi A."/>
            <person name="Hantraye F."/>
            <person name="Hennequin C."/>
            <person name="Jauniaux N."/>
            <person name="Joyet P."/>
            <person name="Kachouri R."/>
            <person name="Kerrest A."/>
            <person name="Koszul R."/>
            <person name="Lemaire M."/>
            <person name="Lesur I."/>
            <person name="Ma L."/>
            <person name="Muller H."/>
            <person name="Nicaud J.-M."/>
            <person name="Nikolski M."/>
            <person name="Oztas S."/>
            <person name="Ozier-Kalogeropoulos O."/>
            <person name="Pellenz S."/>
            <person name="Potier S."/>
            <person name="Richard G.-F."/>
            <person name="Straub M.-L."/>
            <person name="Suleau A."/>
            <person name="Swennen D."/>
            <person name="Tekaia F."/>
            <person name="Wesolowski-Louvel M."/>
            <person name="Westhof E."/>
            <person name="Wirth B."/>
            <person name="Zeniou-Meyer M."/>
            <person name="Zivanovic Y."/>
            <person name="Bolotin-Fukuhara M."/>
            <person name="Thierry A."/>
            <person name="Bouchier C."/>
            <person name="Caudron B."/>
            <person name="Scarpelli C."/>
            <person name="Gaillardin C."/>
            <person name="Weissenbach J."/>
            <person name="Wincker P."/>
            <person name="Souciet J.-L."/>
        </authorList>
    </citation>
    <scope>NUCLEOTIDE SEQUENCE [LARGE SCALE GENOMIC DNA]</scope>
    <source>
        <strain>ATCC 8585 / CBS 2359 / DSM 70799 / NBRC 1267 / NRRL Y-1140 / WM37</strain>
    </source>
</reference>
<evidence type="ECO:0000250" key="1"/>
<evidence type="ECO:0000255" key="2"/>
<evidence type="ECO:0000305" key="3"/>
<accession>Q6CMB5</accession>
<gene>
    <name type="primary">SPC110</name>
    <name type="ordered locus">KLLA0E21517g</name>
</gene>
<keyword id="KW-0175">Coiled coil</keyword>
<keyword id="KW-0963">Cytoplasm</keyword>
<keyword id="KW-0206">Cytoskeleton</keyword>
<keyword id="KW-0539">Nucleus</keyword>
<keyword id="KW-1185">Reference proteome</keyword>
<organism>
    <name type="scientific">Kluyveromyces lactis (strain ATCC 8585 / CBS 2359 / DSM 70799 / NBRC 1267 / NRRL Y-1140 / WM37)</name>
    <name type="common">Yeast</name>
    <name type="synonym">Candida sphaerica</name>
    <dbReference type="NCBI Taxonomy" id="284590"/>
    <lineage>
        <taxon>Eukaryota</taxon>
        <taxon>Fungi</taxon>
        <taxon>Dikarya</taxon>
        <taxon>Ascomycota</taxon>
        <taxon>Saccharomycotina</taxon>
        <taxon>Saccharomycetes</taxon>
        <taxon>Saccharomycetales</taxon>
        <taxon>Saccharomycetaceae</taxon>
        <taxon>Kluyveromyces</taxon>
    </lineage>
</organism>
<feature type="chain" id="PRO_0000409200" description="Spindle pole body component 110">
    <location>
        <begin position="1"/>
        <end position="858"/>
    </location>
</feature>
<feature type="coiled-coil region" evidence="2">
    <location>
        <begin position="118"/>
        <end position="725"/>
    </location>
</feature>
<name>SP110_KLULA</name>